<sequence length="788" mass="88523">MSEEQWVSLSSEEFDQLQKYSEYSSKKIKDVLAEFNEGGSLRQYDPHKPISYDVFKLFMRAYLEVDLPQPLSTHLFLAFSQKPRQETPDHPKEGASSSEPNVSDYNSDNAAKADEACAPDTESKTTKTQAPSKELEAAAPWEDPGALASSSDAPVVYLKDVVCYLSLMETGRPQDKLEFMFRLYDSDENGLLDQAEMDQIVSQMLHVAQYLEWDPTELRPILKEMLQGMDYDKDGFVSLQEWINGGMTTIPLLVLLGMDDSGSKGDGRHAWTLKHFKKPTYCNFCRAMLMGVGKQGLCCIYCKYTVHQRCVSKTIHGCVKTNSKAKRSGEVMQHAWVEGNSSVKCDRCHKSIKCYQSVTARHCVWCRMTFHRKCELSTVCDGGELKDHILLPTSICPVSGDRQGGKSDGSVAAKGELVTQYKIIPSPGTHPLLVLVNPKSGGRQGERILRKFHYLLNPEQVFNLDNGGPTPGLNFFHDTPDFRVLACGGDGTVGWILDCIDKANFTKHPPVAVLPLGTGNDLARCLRWGGGYEGGSLTKILKEIEQSPLVMLDRWYLEVMPREEVENGDQVPYNIMNNYFSIGVDASIAHRFHMMREKHPEKFNSRMKNKLWYFEFGTSETFAATCKKLHDHIELECDGVEVDLSNIFLEGIAILNIPSMYGGTNLWGETKKNRAVIRESRKSVTDPKELKCCVQDLSDQLLEVVGLEGAMEMGQIYTGLKSAGRRLAQCSSVTIRTNKLLPMQVDGEPWMQPQCTIKITHKNQAPMMMGPPQKSSFFSLRRKSRSKD</sequence>
<comment type="function">
    <text evidence="1 7">Diacylglycerol kinase that converts diacylglycerol/DAG into phosphatidic acid/phosphatidate/PA and regulates the respective levels of these two bioactive lipids (PubMed:32033984). Thereby, acts as a central switch between the signaling pathways activated by these second messengers with different cellular targets and opposite effects in numerous biological processes (PubMed:32033984). Has no apparent specificity with regard to the acyl compositions of diacylglycerol (By similarity). Specifically expressed in the cerebellum where it controls the level of diacylglycerol which in turn regulates the activity of protein kinase C gamma (PubMed:32033984). Through protein kinase C gamma, indirectly regulates the dendritic development of Purkinje cells, cerebellar long term depression and ultimately cerebellar motor coordination (PubMed:32033984).</text>
</comment>
<comment type="catalytic activity">
    <reaction evidence="7">
        <text>a 1,2-diacyl-sn-glycerol + ATP = a 1,2-diacyl-sn-glycero-3-phosphate + ADP + H(+)</text>
        <dbReference type="Rhea" id="RHEA:10272"/>
        <dbReference type="ChEBI" id="CHEBI:15378"/>
        <dbReference type="ChEBI" id="CHEBI:17815"/>
        <dbReference type="ChEBI" id="CHEBI:30616"/>
        <dbReference type="ChEBI" id="CHEBI:58608"/>
        <dbReference type="ChEBI" id="CHEBI:456216"/>
        <dbReference type="EC" id="2.7.1.107"/>
    </reaction>
    <physiologicalReaction direction="left-to-right" evidence="7">
        <dbReference type="Rhea" id="RHEA:10273"/>
    </physiologicalReaction>
</comment>
<comment type="catalytic activity">
    <reaction evidence="2">
        <text>1,2-didecanoyl-sn-glycerol + ATP = 1,2-didecanoyl-sn-glycero-3-phosphate + ADP + H(+)</text>
        <dbReference type="Rhea" id="RHEA:43428"/>
        <dbReference type="ChEBI" id="CHEBI:15378"/>
        <dbReference type="ChEBI" id="CHEBI:18155"/>
        <dbReference type="ChEBI" id="CHEBI:30616"/>
        <dbReference type="ChEBI" id="CHEBI:78227"/>
        <dbReference type="ChEBI" id="CHEBI:456216"/>
    </reaction>
    <physiologicalReaction direction="left-to-right" evidence="2">
        <dbReference type="Rhea" id="RHEA:43429"/>
    </physiologicalReaction>
</comment>
<comment type="catalytic activity">
    <reaction evidence="2">
        <text>1,2-di-(9Z-octadecenoyl)-sn-glycerol + ATP = 1,2-di-(9Z-octadecenoyl)-sn-glycero-3-phosphate + ADP + H(+)</text>
        <dbReference type="Rhea" id="RHEA:40327"/>
        <dbReference type="ChEBI" id="CHEBI:15378"/>
        <dbReference type="ChEBI" id="CHEBI:30616"/>
        <dbReference type="ChEBI" id="CHEBI:52333"/>
        <dbReference type="ChEBI" id="CHEBI:74546"/>
        <dbReference type="ChEBI" id="CHEBI:456216"/>
    </reaction>
    <physiologicalReaction direction="left-to-right" evidence="2">
        <dbReference type="Rhea" id="RHEA:40328"/>
    </physiologicalReaction>
</comment>
<comment type="catalytic activity">
    <reaction evidence="2">
        <text>1-octadecanoyl-2-(9Z,12Z)-octadecadienoyl-sn-glycerol + ATP = 1-octadecanoyl-2-(9Z,12Z-octadecadienoyl)-sn-glycero-3-phosphate + ADP + H(+)</text>
        <dbReference type="Rhea" id="RHEA:40339"/>
        <dbReference type="ChEBI" id="CHEBI:15378"/>
        <dbReference type="ChEBI" id="CHEBI:30616"/>
        <dbReference type="ChEBI" id="CHEBI:77097"/>
        <dbReference type="ChEBI" id="CHEBI:77098"/>
        <dbReference type="ChEBI" id="CHEBI:456216"/>
    </reaction>
    <physiologicalReaction direction="left-to-right" evidence="2">
        <dbReference type="Rhea" id="RHEA:40340"/>
    </physiologicalReaction>
</comment>
<comment type="catalytic activity">
    <reaction evidence="2">
        <text>1-octadecanoyl-2-(5Z,8Z,11Z,14Z-eicosatetraenoyl)-sn-glycerol + ATP = 1-octadecanoyl-2-(5Z,8Z,11Z,14Z-eicosatetraenoyl)-sn-glycero-3-phosphate + ADP + H(+)</text>
        <dbReference type="Rhea" id="RHEA:40323"/>
        <dbReference type="ChEBI" id="CHEBI:15378"/>
        <dbReference type="ChEBI" id="CHEBI:30616"/>
        <dbReference type="ChEBI" id="CHEBI:75728"/>
        <dbReference type="ChEBI" id="CHEBI:77091"/>
        <dbReference type="ChEBI" id="CHEBI:456216"/>
    </reaction>
    <physiologicalReaction direction="left-to-right" evidence="2">
        <dbReference type="Rhea" id="RHEA:40324"/>
    </physiologicalReaction>
</comment>
<comment type="activity regulation">
    <text evidence="1 2">The activity is calcium-dependent (By similarity). Requires phosphatidylserine for maximal activity (By similarity).</text>
</comment>
<comment type="pathway">
    <text evidence="7">Lipid metabolism; glycerolipid metabolism.</text>
</comment>
<comment type="subcellular location">
    <subcellularLocation>
        <location evidence="2">Membrane</location>
    </subcellularLocation>
    <subcellularLocation>
        <location evidence="1">Cytoplasm</location>
        <location evidence="1">Cytosol</location>
    </subcellularLocation>
    <subcellularLocation>
        <location evidence="2">Cytoplasm</location>
        <location evidence="2">Cytoskeleton</location>
    </subcellularLocation>
</comment>
<comment type="tissue specificity">
    <text evidence="7">Expressed in hippocampus and cerebellar Purkinje cells and weakly and diffusely expressed in the granule cells.</text>
</comment>
<comment type="disruption phenotype">
    <text evidence="7">Homozygous knockout mice show impairments in motor coordination, long-term depression/LTD and development of Purkinje cells (PubMed:32033984). The level of phosphatidic acid in synaptosomal membranes is significantly decreased (PubMed:32033984). The number of branches, the total length of the dendrites and the membrane capacitance of the distal dendritic region are significantly lower (PubMed:32033984).</text>
</comment>
<comment type="similarity">
    <text evidence="8">Belongs to the eukaryotic diacylglycerol kinase family.</text>
</comment>
<protein>
    <recommendedName>
        <fullName>Diacylglycerol kinase gamma</fullName>
        <shortName>DAG kinase gamma</shortName>
        <ecNumber evidence="7">2.7.1.107</ecNumber>
    </recommendedName>
    <alternativeName>
        <fullName>88 kDa diacylglycerol kinase</fullName>
    </alternativeName>
    <alternativeName>
        <fullName>Diglyceride kinase gamma</fullName>
        <shortName>DGK-gamma</shortName>
    </alternativeName>
</protein>
<accession>Q91WG7</accession>
<name>DGKG_MOUSE</name>
<keyword id="KW-0067">ATP-binding</keyword>
<keyword id="KW-0106">Calcium</keyword>
<keyword id="KW-0963">Cytoplasm</keyword>
<keyword id="KW-0206">Cytoskeleton</keyword>
<keyword id="KW-0418">Kinase</keyword>
<keyword id="KW-0443">Lipid metabolism</keyword>
<keyword id="KW-0472">Membrane</keyword>
<keyword id="KW-0479">Metal-binding</keyword>
<keyword id="KW-0547">Nucleotide-binding</keyword>
<keyword id="KW-1185">Reference proteome</keyword>
<keyword id="KW-0677">Repeat</keyword>
<keyword id="KW-0808">Transferase</keyword>
<keyword id="KW-0862">Zinc</keyword>
<keyword id="KW-0863">Zinc-finger</keyword>
<proteinExistence type="evidence at protein level"/>
<evidence type="ECO:0000250" key="1">
    <source>
        <dbReference type="UniProtKB" id="P49619"/>
    </source>
</evidence>
<evidence type="ECO:0000250" key="2">
    <source>
        <dbReference type="UniProtKB" id="P49620"/>
    </source>
</evidence>
<evidence type="ECO:0000255" key="3">
    <source>
        <dbReference type="PROSITE-ProRule" id="PRU00226"/>
    </source>
</evidence>
<evidence type="ECO:0000255" key="4">
    <source>
        <dbReference type="PROSITE-ProRule" id="PRU00448"/>
    </source>
</evidence>
<evidence type="ECO:0000255" key="5">
    <source>
        <dbReference type="PROSITE-ProRule" id="PRU00783"/>
    </source>
</evidence>
<evidence type="ECO:0000256" key="6">
    <source>
        <dbReference type="SAM" id="MobiDB-lite"/>
    </source>
</evidence>
<evidence type="ECO:0000269" key="7">
    <source>
    </source>
</evidence>
<evidence type="ECO:0000305" key="8"/>
<organism>
    <name type="scientific">Mus musculus</name>
    <name type="common">Mouse</name>
    <dbReference type="NCBI Taxonomy" id="10090"/>
    <lineage>
        <taxon>Eukaryota</taxon>
        <taxon>Metazoa</taxon>
        <taxon>Chordata</taxon>
        <taxon>Craniata</taxon>
        <taxon>Vertebrata</taxon>
        <taxon>Euteleostomi</taxon>
        <taxon>Mammalia</taxon>
        <taxon>Eutheria</taxon>
        <taxon>Euarchontoglires</taxon>
        <taxon>Glires</taxon>
        <taxon>Rodentia</taxon>
        <taxon>Myomorpha</taxon>
        <taxon>Muroidea</taxon>
        <taxon>Muridae</taxon>
        <taxon>Murinae</taxon>
        <taxon>Mus</taxon>
        <taxon>Mus</taxon>
    </lineage>
</organism>
<feature type="chain" id="PRO_0000218460" description="Diacylglycerol kinase gamma">
    <location>
        <begin position="1"/>
        <end position="788"/>
    </location>
</feature>
<feature type="domain" description="EF-hand 1" evidence="4">
    <location>
        <begin position="172"/>
        <end position="207"/>
    </location>
</feature>
<feature type="domain" description="EF-hand 2" evidence="4">
    <location>
        <begin position="217"/>
        <end position="252"/>
    </location>
</feature>
<feature type="domain" description="DAGKc" evidence="5">
    <location>
        <begin position="427"/>
        <end position="561"/>
    </location>
</feature>
<feature type="zinc finger region" description="Phorbol-ester/DAG-type 1" evidence="3">
    <location>
        <begin position="268"/>
        <end position="318"/>
    </location>
</feature>
<feature type="zinc finger region" description="Phorbol-ester/DAG-type 2" evidence="3">
    <location>
        <begin position="333"/>
        <end position="380"/>
    </location>
</feature>
<feature type="region of interest" description="Disordered" evidence="6">
    <location>
        <begin position="83"/>
        <end position="149"/>
    </location>
</feature>
<feature type="region of interest" description="Disordered" evidence="6">
    <location>
        <begin position="765"/>
        <end position="788"/>
    </location>
</feature>
<feature type="compositionally biased region" description="Basic and acidic residues" evidence="6">
    <location>
        <begin position="83"/>
        <end position="93"/>
    </location>
</feature>
<feature type="compositionally biased region" description="Polar residues" evidence="6">
    <location>
        <begin position="95"/>
        <end position="109"/>
    </location>
</feature>
<feature type="compositionally biased region" description="Basic and acidic residues" evidence="6">
    <location>
        <begin position="111"/>
        <end position="125"/>
    </location>
</feature>
<feature type="binding site" evidence="4">
    <location>
        <position position="185"/>
    </location>
    <ligand>
        <name>Ca(2+)</name>
        <dbReference type="ChEBI" id="CHEBI:29108"/>
        <label>1</label>
    </ligand>
</feature>
<feature type="binding site" evidence="4">
    <location>
        <position position="187"/>
    </location>
    <ligand>
        <name>Ca(2+)</name>
        <dbReference type="ChEBI" id="CHEBI:29108"/>
        <label>1</label>
    </ligand>
</feature>
<feature type="binding site" evidence="4">
    <location>
        <position position="189"/>
    </location>
    <ligand>
        <name>Ca(2+)</name>
        <dbReference type="ChEBI" id="CHEBI:29108"/>
        <label>1</label>
    </ligand>
</feature>
<feature type="binding site" evidence="4">
    <location>
        <position position="196"/>
    </location>
    <ligand>
        <name>Ca(2+)</name>
        <dbReference type="ChEBI" id="CHEBI:29108"/>
        <label>1</label>
    </ligand>
</feature>
<feature type="binding site" evidence="4">
    <location>
        <position position="230"/>
    </location>
    <ligand>
        <name>Ca(2+)</name>
        <dbReference type="ChEBI" id="CHEBI:29108"/>
        <label>2</label>
    </ligand>
</feature>
<feature type="binding site" evidence="4">
    <location>
        <position position="232"/>
    </location>
    <ligand>
        <name>Ca(2+)</name>
        <dbReference type="ChEBI" id="CHEBI:29108"/>
        <label>2</label>
    </ligand>
</feature>
<feature type="binding site" evidence="4">
    <location>
        <position position="234"/>
    </location>
    <ligand>
        <name>Ca(2+)</name>
        <dbReference type="ChEBI" id="CHEBI:29108"/>
        <label>2</label>
    </ligand>
</feature>
<feature type="binding site" evidence="4">
    <location>
        <position position="241"/>
    </location>
    <ligand>
        <name>Ca(2+)</name>
        <dbReference type="ChEBI" id="CHEBI:29108"/>
        <label>2</label>
    </ligand>
</feature>
<gene>
    <name type="primary">Dgkg</name>
    <name type="synonym">Dagk3</name>
</gene>
<reference key="1">
    <citation type="journal article" date="2004" name="Genome Res.">
        <title>The status, quality, and expansion of the NIH full-length cDNA project: the Mammalian Gene Collection (MGC).</title>
        <authorList>
            <consortium name="The MGC Project Team"/>
        </authorList>
    </citation>
    <scope>NUCLEOTIDE SEQUENCE [LARGE SCALE MRNA]</scope>
    <source>
        <tissue>Kidney</tissue>
    </source>
</reference>
<reference key="2">
    <citation type="journal article" date="2010" name="Cell">
        <title>A tissue-specific atlas of mouse protein phosphorylation and expression.</title>
        <authorList>
            <person name="Huttlin E.L."/>
            <person name="Jedrychowski M.P."/>
            <person name="Elias J.E."/>
            <person name="Goswami T."/>
            <person name="Rad R."/>
            <person name="Beausoleil S.A."/>
            <person name="Villen J."/>
            <person name="Haas W."/>
            <person name="Sowa M.E."/>
            <person name="Gygi S.P."/>
        </authorList>
    </citation>
    <scope>IDENTIFICATION BY MASS SPECTROMETRY [LARGE SCALE ANALYSIS]</scope>
    <source>
        <tissue>Brain</tissue>
    </source>
</reference>
<reference key="3">
    <citation type="journal article" date="2020" name="ENeuro">
        <title>DGKgamma Knock-Out Mice Show Impairments in Cerebellar Motor Coordination, LTD, and the Dendritic Development of Purkinje Cells through the Activation of PKCgamma.</title>
        <authorList>
            <person name="Tsumagari R."/>
            <person name="Kakizawa S."/>
            <person name="Kikunaga S."/>
            <person name="Fujihara Y."/>
            <person name="Ueda S."/>
            <person name="Yamanoue M."/>
            <person name="Saito N."/>
            <person name="Ikawa M."/>
            <person name="Shirai Y."/>
        </authorList>
    </citation>
    <scope>FUNCTION</scope>
    <scope>CATALYTIC ACTIVITY</scope>
    <scope>PATHWAY</scope>
    <scope>DISRUPTION PHENOTYPE</scope>
    <scope>TISSUE SPECIFICITY</scope>
</reference>
<dbReference type="EC" id="2.7.1.107" evidence="7"/>
<dbReference type="EMBL" id="BC015278">
    <property type="protein sequence ID" value="AAH15278.1"/>
    <property type="molecule type" value="mRNA"/>
</dbReference>
<dbReference type="CCDS" id="CCDS28068.1"/>
<dbReference type="RefSeq" id="NP_619591.1">
    <property type="nucleotide sequence ID" value="NM_138650.2"/>
</dbReference>
<dbReference type="BioGRID" id="225378">
    <property type="interactions" value="4"/>
</dbReference>
<dbReference type="FunCoup" id="Q91WG7">
    <property type="interactions" value="725"/>
</dbReference>
<dbReference type="IntAct" id="Q91WG7">
    <property type="interactions" value="1"/>
</dbReference>
<dbReference type="MINT" id="Q91WG7"/>
<dbReference type="STRING" id="10090.ENSMUSP00000087371"/>
<dbReference type="GlyGen" id="Q91WG7">
    <property type="glycosylation" value="1 site"/>
</dbReference>
<dbReference type="iPTMnet" id="Q91WG7"/>
<dbReference type="PhosphoSitePlus" id="Q91WG7"/>
<dbReference type="SwissPalm" id="Q91WG7"/>
<dbReference type="PaxDb" id="10090-ENSMUSP00000087371"/>
<dbReference type="ProteomicsDB" id="277325"/>
<dbReference type="Antibodypedia" id="34852">
    <property type="antibodies" value="118 antibodies from 17 providers"/>
</dbReference>
<dbReference type="DNASU" id="110197"/>
<dbReference type="Ensembl" id="ENSMUST00000089925.10">
    <property type="protein sequence ID" value="ENSMUSP00000087371.4"/>
    <property type="gene ID" value="ENSMUSG00000022861.18"/>
</dbReference>
<dbReference type="GeneID" id="110197"/>
<dbReference type="KEGG" id="mmu:110197"/>
<dbReference type="UCSC" id="uc007ysg.2">
    <property type="organism name" value="mouse"/>
</dbReference>
<dbReference type="AGR" id="MGI:105060"/>
<dbReference type="CTD" id="1608"/>
<dbReference type="MGI" id="MGI:105060">
    <property type="gene designation" value="Dgkg"/>
</dbReference>
<dbReference type="VEuPathDB" id="HostDB:ENSMUSG00000022861"/>
<dbReference type="eggNOG" id="KOG1169">
    <property type="taxonomic scope" value="Eukaryota"/>
</dbReference>
<dbReference type="GeneTree" id="ENSGT00940000156768"/>
<dbReference type="InParanoid" id="Q91WG7"/>
<dbReference type="OMA" id="GPDTNIQ"/>
<dbReference type="OrthoDB" id="242257at2759"/>
<dbReference type="PhylomeDB" id="Q91WG7"/>
<dbReference type="TreeFam" id="TF313104"/>
<dbReference type="Reactome" id="R-MMU-114508">
    <property type="pathway name" value="Effects of PIP2 hydrolysis"/>
</dbReference>
<dbReference type="UniPathway" id="UPA00230"/>
<dbReference type="BioGRID-ORCS" id="110197">
    <property type="hits" value="2 hits in 78 CRISPR screens"/>
</dbReference>
<dbReference type="ChiTaRS" id="Dgkg">
    <property type="organism name" value="mouse"/>
</dbReference>
<dbReference type="PRO" id="PR:Q91WG7"/>
<dbReference type="Proteomes" id="UP000000589">
    <property type="component" value="Chromosome 16"/>
</dbReference>
<dbReference type="RNAct" id="Q91WG7">
    <property type="molecule type" value="protein"/>
</dbReference>
<dbReference type="Bgee" id="ENSMUSG00000022861">
    <property type="expression patterns" value="Expressed in subiculum and 109 other cell types or tissues"/>
</dbReference>
<dbReference type="ExpressionAtlas" id="Q91WG7">
    <property type="expression patterns" value="baseline and differential"/>
</dbReference>
<dbReference type="GO" id="GO:0005856">
    <property type="term" value="C:cytoskeleton"/>
    <property type="evidence" value="ECO:0007669"/>
    <property type="project" value="UniProtKB-SubCell"/>
</dbReference>
<dbReference type="GO" id="GO:0005829">
    <property type="term" value="C:cytosol"/>
    <property type="evidence" value="ECO:0000250"/>
    <property type="project" value="UniProtKB"/>
</dbReference>
<dbReference type="GO" id="GO:0016020">
    <property type="term" value="C:membrane"/>
    <property type="evidence" value="ECO:0000250"/>
    <property type="project" value="UniProtKB"/>
</dbReference>
<dbReference type="GO" id="GO:0005524">
    <property type="term" value="F:ATP binding"/>
    <property type="evidence" value="ECO:0007669"/>
    <property type="project" value="UniProtKB-KW"/>
</dbReference>
<dbReference type="GO" id="GO:0004143">
    <property type="term" value="F:ATP-dependent diacylglycerol kinase activity"/>
    <property type="evidence" value="ECO:0000315"/>
    <property type="project" value="UniProtKB"/>
</dbReference>
<dbReference type="GO" id="GO:0005509">
    <property type="term" value="F:calcium ion binding"/>
    <property type="evidence" value="ECO:0007669"/>
    <property type="project" value="InterPro"/>
</dbReference>
<dbReference type="GO" id="GO:0008289">
    <property type="term" value="F:lipid binding"/>
    <property type="evidence" value="ECO:0007669"/>
    <property type="project" value="Ensembl"/>
</dbReference>
<dbReference type="GO" id="GO:0008270">
    <property type="term" value="F:zinc ion binding"/>
    <property type="evidence" value="ECO:0007669"/>
    <property type="project" value="UniProtKB-KW"/>
</dbReference>
<dbReference type="GO" id="GO:0046339">
    <property type="term" value="P:diacylglycerol metabolic process"/>
    <property type="evidence" value="ECO:0000315"/>
    <property type="project" value="UniProtKB"/>
</dbReference>
<dbReference type="GO" id="GO:0046834">
    <property type="term" value="P:lipid phosphorylation"/>
    <property type="evidence" value="ECO:0000315"/>
    <property type="project" value="UniProtKB"/>
</dbReference>
<dbReference type="GO" id="GO:0160195">
    <property type="term" value="P:negative regulation of phospholipase C/protein kinase C signal transduction"/>
    <property type="evidence" value="ECO:0000315"/>
    <property type="project" value="UniProtKB"/>
</dbReference>
<dbReference type="GO" id="GO:0006654">
    <property type="term" value="P:phosphatidic acid biosynthetic process"/>
    <property type="evidence" value="ECO:0000315"/>
    <property type="project" value="UniProtKB"/>
</dbReference>
<dbReference type="GO" id="GO:0007200">
    <property type="term" value="P:phospholipase C-activating G protein-coupled receptor signaling pathway"/>
    <property type="evidence" value="ECO:0007669"/>
    <property type="project" value="InterPro"/>
</dbReference>
<dbReference type="GO" id="GO:0050773">
    <property type="term" value="P:regulation of dendrite development"/>
    <property type="evidence" value="ECO:0000315"/>
    <property type="project" value="UniProtKB"/>
</dbReference>
<dbReference type="CDD" id="cd20892">
    <property type="entry name" value="C1_DGKgamma_rpt2"/>
    <property type="match status" value="1"/>
</dbReference>
<dbReference type="CDD" id="cd00051">
    <property type="entry name" value="EFh"/>
    <property type="match status" value="1"/>
</dbReference>
<dbReference type="FunFam" id="1.10.238.10:FF:000017">
    <property type="entry name" value="Diacylglycerol kinase"/>
    <property type="match status" value="1"/>
</dbReference>
<dbReference type="FunFam" id="1.10.238.110:FF:000002">
    <property type="entry name" value="Diacylglycerol kinase"/>
    <property type="match status" value="1"/>
</dbReference>
<dbReference type="FunFam" id="2.60.200.40:FF:000003">
    <property type="entry name" value="Diacylglycerol kinase"/>
    <property type="match status" value="1"/>
</dbReference>
<dbReference type="FunFam" id="3.30.60.20:FF:000043">
    <property type="entry name" value="Diacylglycerol kinase"/>
    <property type="match status" value="1"/>
</dbReference>
<dbReference type="FunFam" id="3.40.50.10330:FF:000003">
    <property type="entry name" value="Diacylglycerol kinase"/>
    <property type="match status" value="1"/>
</dbReference>
<dbReference type="Gene3D" id="2.60.200.40">
    <property type="match status" value="1"/>
</dbReference>
<dbReference type="Gene3D" id="3.30.60.20">
    <property type="match status" value="2"/>
</dbReference>
<dbReference type="Gene3D" id="1.10.238.110">
    <property type="entry name" value="Diacylglycerol kinase alpha"/>
    <property type="match status" value="2"/>
</dbReference>
<dbReference type="Gene3D" id="1.10.238.10">
    <property type="entry name" value="EF-hand"/>
    <property type="match status" value="1"/>
</dbReference>
<dbReference type="Gene3D" id="3.40.50.10330">
    <property type="entry name" value="Probable inorganic polyphosphate/atp-NAD kinase, domain 1"/>
    <property type="match status" value="1"/>
</dbReference>
<dbReference type="InterPro" id="IPR017438">
    <property type="entry name" value="ATP-NAD_kinase_N"/>
</dbReference>
<dbReference type="InterPro" id="IPR046349">
    <property type="entry name" value="C1-like_sf"/>
</dbReference>
<dbReference type="InterPro" id="IPR047475">
    <property type="entry name" value="C1_DGKgamma_rpt2"/>
</dbReference>
<dbReference type="InterPro" id="IPR029477">
    <property type="entry name" value="DAG_kinase_typeI_N"/>
</dbReference>
<dbReference type="InterPro" id="IPR037607">
    <property type="entry name" value="DGK"/>
</dbReference>
<dbReference type="InterPro" id="IPR038199">
    <property type="entry name" value="DGK_typeI_N_sf"/>
</dbReference>
<dbReference type="InterPro" id="IPR000756">
    <property type="entry name" value="Diacylglycerol_kin_accessory"/>
</dbReference>
<dbReference type="InterPro" id="IPR001206">
    <property type="entry name" value="Diacylglycerol_kinase_cat_dom"/>
</dbReference>
<dbReference type="InterPro" id="IPR011992">
    <property type="entry name" value="EF-hand-dom_pair"/>
</dbReference>
<dbReference type="InterPro" id="IPR018247">
    <property type="entry name" value="EF_Hand_1_Ca_BS"/>
</dbReference>
<dbReference type="InterPro" id="IPR002048">
    <property type="entry name" value="EF_hand_dom"/>
</dbReference>
<dbReference type="InterPro" id="IPR016064">
    <property type="entry name" value="NAD/diacylglycerol_kinase_sf"/>
</dbReference>
<dbReference type="InterPro" id="IPR002219">
    <property type="entry name" value="PE/DAG-bd"/>
</dbReference>
<dbReference type="PANTHER" id="PTHR11255">
    <property type="entry name" value="DIACYLGLYCEROL KINASE"/>
    <property type="match status" value="1"/>
</dbReference>
<dbReference type="PANTHER" id="PTHR11255:SF36">
    <property type="entry name" value="DIACYLGLYCEROL KINASE GAMMA"/>
    <property type="match status" value="1"/>
</dbReference>
<dbReference type="Pfam" id="PF00130">
    <property type="entry name" value="C1_1"/>
    <property type="match status" value="1"/>
</dbReference>
<dbReference type="Pfam" id="PF14513">
    <property type="entry name" value="DAG_kinase_N"/>
    <property type="match status" value="1"/>
</dbReference>
<dbReference type="Pfam" id="PF00609">
    <property type="entry name" value="DAGK_acc"/>
    <property type="match status" value="1"/>
</dbReference>
<dbReference type="Pfam" id="PF00781">
    <property type="entry name" value="DAGK_cat"/>
    <property type="match status" value="1"/>
</dbReference>
<dbReference type="Pfam" id="PF13499">
    <property type="entry name" value="EF-hand_7"/>
    <property type="match status" value="1"/>
</dbReference>
<dbReference type="SMART" id="SM00109">
    <property type="entry name" value="C1"/>
    <property type="match status" value="2"/>
</dbReference>
<dbReference type="SMART" id="SM00045">
    <property type="entry name" value="DAGKa"/>
    <property type="match status" value="1"/>
</dbReference>
<dbReference type="SMART" id="SM00046">
    <property type="entry name" value="DAGKc"/>
    <property type="match status" value="1"/>
</dbReference>
<dbReference type="SMART" id="SM00054">
    <property type="entry name" value="EFh"/>
    <property type="match status" value="2"/>
</dbReference>
<dbReference type="SUPFAM" id="SSF57889">
    <property type="entry name" value="Cysteine-rich domain"/>
    <property type="match status" value="2"/>
</dbReference>
<dbReference type="SUPFAM" id="SSF47473">
    <property type="entry name" value="EF-hand"/>
    <property type="match status" value="2"/>
</dbReference>
<dbReference type="SUPFAM" id="SSF111331">
    <property type="entry name" value="NAD kinase/diacylglycerol kinase-like"/>
    <property type="match status" value="1"/>
</dbReference>
<dbReference type="PROSITE" id="PS50146">
    <property type="entry name" value="DAGK"/>
    <property type="match status" value="1"/>
</dbReference>
<dbReference type="PROSITE" id="PS00018">
    <property type="entry name" value="EF_HAND_1"/>
    <property type="match status" value="2"/>
</dbReference>
<dbReference type="PROSITE" id="PS50222">
    <property type="entry name" value="EF_HAND_2"/>
    <property type="match status" value="2"/>
</dbReference>
<dbReference type="PROSITE" id="PS00479">
    <property type="entry name" value="ZF_DAG_PE_1"/>
    <property type="match status" value="2"/>
</dbReference>
<dbReference type="PROSITE" id="PS50081">
    <property type="entry name" value="ZF_DAG_PE_2"/>
    <property type="match status" value="2"/>
</dbReference>